<organism>
    <name type="scientific">Oryctolagus cuniculus</name>
    <name type="common">Rabbit</name>
    <dbReference type="NCBI Taxonomy" id="9986"/>
    <lineage>
        <taxon>Eukaryota</taxon>
        <taxon>Metazoa</taxon>
        <taxon>Chordata</taxon>
        <taxon>Craniata</taxon>
        <taxon>Vertebrata</taxon>
        <taxon>Euteleostomi</taxon>
        <taxon>Mammalia</taxon>
        <taxon>Eutheria</taxon>
        <taxon>Euarchontoglires</taxon>
        <taxon>Glires</taxon>
        <taxon>Lagomorpha</taxon>
        <taxon>Leporidae</taxon>
        <taxon>Oryctolagus</taxon>
    </lineage>
</organism>
<reference key="1">
    <citation type="journal article" date="1998" name="Cancer Res.">
        <title>Isolation and partial characterization of a cDNA encoding a rabbit liver carboxylesterase that activates the prodrug irinotecan (CPT-11).</title>
        <authorList>
            <person name="Potter P.M."/>
            <person name="Pawlik C.A."/>
            <person name="Morton C.L."/>
            <person name="Naeve C.W."/>
            <person name="Danks M.K."/>
        </authorList>
    </citation>
    <scope>NUCLEOTIDE SEQUENCE [MRNA]</scope>
    <scope>PROTEIN SEQUENCE OF 19-52</scope>
    <scope>FUNCTION</scope>
    <source>
        <tissue>Liver</tissue>
    </source>
</reference>
<reference key="2">
    <citation type="journal article" date="1988" name="J. Biol. Chem.">
        <title>Complete covalent structure of 60-kDa esterase isolated from 2,3,7,8-tetrachlorodibenzo-p-dioxin-induced rabbit liver microsomes.</title>
        <authorList>
            <person name="Korza G."/>
            <person name="Ozols J."/>
        </authorList>
    </citation>
    <scope>PROTEIN SEQUENCE OF 19-557</scope>
    <scope>ACTIVE SITES SER-221 AND HIS-467</scope>
</reference>
<reference key="3">
    <citation type="journal article" date="1987" name="J. Biol. Chem.">
        <title>Isolation and characterization of a 60-kilodalton glycoprotein esterase from liver microsomal membranes.</title>
        <authorList>
            <person name="Ozols J."/>
        </authorList>
    </citation>
    <scope>PROTEIN SEQUENCE OF 19-88 AND 558-565</scope>
</reference>
<reference key="4">
    <citation type="journal article" date="2002" name="Nat. Struct. Biol.">
        <title>Structural insights into CPT-11 activation by mammalian carboxylesterases.</title>
        <authorList>
            <person name="Bencharit S."/>
            <person name="Morton C.L."/>
            <person name="Howard-Williams E.L."/>
            <person name="Danks M.K."/>
            <person name="Potter P.M."/>
            <person name="Redinbo M.R."/>
        </authorList>
    </citation>
    <scope>X-RAY CRYSTALLOGRAPHY (2.5 ANGSTROMS) OF 23-565 IN COMPLEX WITH PRODUCT</scope>
</reference>
<feature type="signal peptide" evidence="5 6 7">
    <location>
        <begin position="1"/>
        <end position="18"/>
    </location>
</feature>
<feature type="chain" id="PRO_0000008578" description="Liver carboxylesterase 1">
    <location>
        <begin position="19"/>
        <end position="565"/>
    </location>
</feature>
<feature type="short sequence motif" description="Prevents secretion from ER" evidence="2">
    <location>
        <position position="565"/>
    </location>
</feature>
<feature type="active site" description="Acyl-ester intermediate" evidence="3">
    <location>
        <position position="221"/>
    </location>
</feature>
<feature type="active site" description="Charge relay system" evidence="1">
    <location>
        <position position="353"/>
    </location>
</feature>
<feature type="active site" description="Charge relay system" evidence="1">
    <location>
        <position position="467"/>
    </location>
</feature>
<feature type="glycosylation site" description="N-linked (GlcNAc...) asparagine" evidence="5">
    <location>
        <position position="79"/>
    </location>
</feature>
<feature type="glycosylation site" description="N-linked (GlcNAc...) asparagine" evidence="5">
    <location>
        <position position="389"/>
    </location>
</feature>
<feature type="disulfide bond" evidence="4 9">
    <location>
        <begin position="87"/>
        <end position="116"/>
    </location>
</feature>
<feature type="disulfide bond" evidence="4 9">
    <location>
        <begin position="273"/>
        <end position="284"/>
    </location>
</feature>
<feature type="sequence conflict" description="In Ref. 2; AA sequence." evidence="8" ref="2">
    <original>H</original>
    <variation>K</variation>
    <location>
        <position position="30"/>
    </location>
</feature>
<feature type="sequence conflict" description="In Ref. 2; AA sequence." evidence="8" ref="2">
    <original>Q</original>
    <variation>S</variation>
    <location>
        <position position="89"/>
    </location>
</feature>
<feature type="sequence conflict" description="In Ref. 2; AA sequence." evidence="8" ref="2">
    <original>WGFFSTGDEHSRGNWGHLDQVAAL</original>
    <variation>GGFGFNIDELFLVAVN</variation>
    <location>
        <begin position="175"/>
        <end position="198"/>
    </location>
</feature>
<feature type="sequence conflict" description="In Ref. 2; AA sequence." evidence="8" ref="2">
    <original>LA</original>
    <variation>YE</variation>
    <location>
        <begin position="335"/>
        <end position="336"/>
    </location>
</feature>
<feature type="strand" evidence="10">
    <location>
        <begin position="36"/>
        <end position="38"/>
    </location>
</feature>
<feature type="strand" evidence="10">
    <location>
        <begin position="47"/>
        <end position="56"/>
    </location>
</feature>
<feature type="helix" evidence="10">
    <location>
        <begin position="61"/>
        <end position="63"/>
    </location>
</feature>
<feature type="strand" evidence="10">
    <location>
        <begin position="86"/>
        <end position="88"/>
    </location>
</feature>
<feature type="helix" evidence="10">
    <location>
        <begin position="91"/>
        <end position="101"/>
    </location>
</feature>
<feature type="strand" evidence="10">
    <location>
        <begin position="103"/>
        <end position="106"/>
    </location>
</feature>
<feature type="strand" evidence="10">
    <location>
        <begin position="112"/>
        <end position="114"/>
    </location>
</feature>
<feature type="strand" evidence="10">
    <location>
        <begin position="118"/>
        <end position="123"/>
    </location>
</feature>
<feature type="strand" evidence="10">
    <location>
        <begin position="133"/>
        <end position="139"/>
    </location>
</feature>
<feature type="turn" evidence="10">
    <location>
        <begin position="143"/>
        <end position="145"/>
    </location>
</feature>
<feature type="helix" evidence="10">
    <location>
        <begin position="155"/>
        <end position="161"/>
    </location>
</feature>
<feature type="strand" evidence="10">
    <location>
        <begin position="164"/>
        <end position="168"/>
    </location>
</feature>
<feature type="helix" evidence="10">
    <location>
        <begin position="173"/>
        <end position="177"/>
    </location>
</feature>
<feature type="helix" evidence="10">
    <location>
        <begin position="189"/>
        <end position="204"/>
    </location>
</feature>
<feature type="helix" evidence="10">
    <location>
        <begin position="205"/>
        <end position="208"/>
    </location>
</feature>
<feature type="strand" evidence="10">
    <location>
        <begin position="210"/>
        <end position="220"/>
    </location>
</feature>
<feature type="helix" evidence="10">
    <location>
        <begin position="222"/>
        <end position="232"/>
    </location>
</feature>
<feature type="helix" evidence="10">
    <location>
        <begin position="234"/>
        <end position="236"/>
    </location>
</feature>
<feature type="turn" evidence="10">
    <location>
        <begin position="237"/>
        <end position="239"/>
    </location>
</feature>
<feature type="strand" evidence="10">
    <location>
        <begin position="241"/>
        <end position="247"/>
    </location>
</feature>
<feature type="strand" evidence="10">
    <location>
        <begin position="253"/>
        <end position="256"/>
    </location>
</feature>
<feature type="helix" evidence="10">
    <location>
        <begin position="261"/>
        <end position="271"/>
    </location>
</feature>
<feature type="helix" evidence="10">
    <location>
        <begin position="278"/>
        <end position="287"/>
    </location>
</feature>
<feature type="helix" evidence="10">
    <location>
        <begin position="290"/>
        <end position="300"/>
    </location>
</feature>
<feature type="strand" evidence="10">
    <location>
        <begin position="324"/>
        <end position="326"/>
    </location>
</feature>
<feature type="helix" evidence="10">
    <location>
        <begin position="331"/>
        <end position="337"/>
    </location>
</feature>
<feature type="strand" evidence="10">
    <location>
        <begin position="345"/>
        <end position="351"/>
    </location>
</feature>
<feature type="helix" evidence="10">
    <location>
        <begin position="376"/>
        <end position="383"/>
    </location>
</feature>
<feature type="helix" evidence="10">
    <location>
        <begin position="385"/>
        <end position="388"/>
    </location>
</feature>
<feature type="turn" evidence="10">
    <location>
        <begin position="392"/>
        <end position="394"/>
    </location>
</feature>
<feature type="helix" evidence="10">
    <location>
        <begin position="395"/>
        <end position="402"/>
    </location>
</feature>
<feature type="helix" evidence="10">
    <location>
        <begin position="416"/>
        <end position="424"/>
    </location>
</feature>
<feature type="helix" evidence="10">
    <location>
        <begin position="426"/>
        <end position="437"/>
    </location>
</feature>
<feature type="turn" evidence="10">
    <location>
        <begin position="438"/>
        <end position="440"/>
    </location>
</feature>
<feature type="strand" evidence="10">
    <location>
        <begin position="443"/>
        <end position="448"/>
    </location>
</feature>
<feature type="helix" evidence="10">
    <location>
        <begin position="469"/>
        <end position="474"/>
    </location>
</feature>
<feature type="turn" evidence="10">
    <location>
        <begin position="475"/>
        <end position="479"/>
    </location>
</feature>
<feature type="strand" evidence="10">
    <location>
        <begin position="480"/>
        <end position="482"/>
    </location>
</feature>
<feature type="helix" evidence="10">
    <location>
        <begin position="486"/>
        <end position="505"/>
    </location>
</feature>
<feature type="strand" evidence="10">
    <location>
        <begin position="525"/>
        <end position="531"/>
    </location>
</feature>
<feature type="strand" evidence="10">
    <location>
        <begin position="533"/>
        <end position="535"/>
    </location>
</feature>
<feature type="helix" evidence="10">
    <location>
        <begin position="540"/>
        <end position="552"/>
    </location>
</feature>
<name>EST1_RABIT</name>
<accession>P12337</accession>
<accession>O77540</accession>
<evidence type="ECO:0000250" key="1"/>
<evidence type="ECO:0000255" key="2"/>
<evidence type="ECO:0000255" key="3">
    <source>
        <dbReference type="PROSITE-ProRule" id="PRU10039"/>
    </source>
</evidence>
<evidence type="ECO:0000269" key="4">
    <source>
    </source>
</evidence>
<evidence type="ECO:0000269" key="5">
    <source>
    </source>
</evidence>
<evidence type="ECO:0000269" key="6">
    <source>
    </source>
</evidence>
<evidence type="ECO:0000269" key="7">
    <source>
    </source>
</evidence>
<evidence type="ECO:0000305" key="8"/>
<evidence type="ECO:0007744" key="9">
    <source>
        <dbReference type="PDB" id="1K4Y"/>
    </source>
</evidence>
<evidence type="ECO:0007829" key="10">
    <source>
        <dbReference type="PDB" id="1K4Y"/>
    </source>
</evidence>
<proteinExistence type="evidence at protein level"/>
<dbReference type="EC" id="3.1.1.1"/>
<dbReference type="EMBL" id="AF036930">
    <property type="protein sequence ID" value="AAC39258.1"/>
    <property type="molecule type" value="mRNA"/>
</dbReference>
<dbReference type="PIR" id="A29923">
    <property type="entry name" value="A29923"/>
</dbReference>
<dbReference type="RefSeq" id="NP_001076234.1">
    <property type="nucleotide sequence ID" value="NM_001082765.2"/>
</dbReference>
<dbReference type="PDB" id="1K4Y">
    <property type="method" value="X-ray"/>
    <property type="resolution" value="2.50 A"/>
    <property type="chains" value="A=23-556"/>
</dbReference>
<dbReference type="PDBsum" id="1K4Y"/>
<dbReference type="SMR" id="P12337"/>
<dbReference type="FunCoup" id="P12337">
    <property type="interactions" value="69"/>
</dbReference>
<dbReference type="STRING" id="9986.ENSOCUP00000040102"/>
<dbReference type="BindingDB" id="P12337"/>
<dbReference type="ChEMBL" id="CHEMBL2623"/>
<dbReference type="ESTHER" id="rabit-1cxes">
    <property type="family name" value="Carb_B_Chordata"/>
</dbReference>
<dbReference type="iPTMnet" id="P12337"/>
<dbReference type="PaxDb" id="9986-ENSOCUP00000005826"/>
<dbReference type="GeneID" id="100009551"/>
<dbReference type="KEGG" id="ocu:100009551"/>
<dbReference type="CTD" id="1066"/>
<dbReference type="eggNOG" id="KOG1516">
    <property type="taxonomic scope" value="Eukaryota"/>
</dbReference>
<dbReference type="InParanoid" id="P12337"/>
<dbReference type="OrthoDB" id="3200163at2759"/>
<dbReference type="BRENDA" id="3.1.1.1">
    <property type="organism ID" value="1749"/>
</dbReference>
<dbReference type="SABIO-RK" id="P12337"/>
<dbReference type="EvolutionaryTrace" id="P12337"/>
<dbReference type="PRO" id="PR:P12337"/>
<dbReference type="Proteomes" id="UP000001811">
    <property type="component" value="Unplaced"/>
</dbReference>
<dbReference type="GO" id="GO:0005788">
    <property type="term" value="C:endoplasmic reticulum lumen"/>
    <property type="evidence" value="ECO:0007669"/>
    <property type="project" value="UniProtKB-SubCell"/>
</dbReference>
<dbReference type="GO" id="GO:0106435">
    <property type="term" value="F:carboxylesterase activity"/>
    <property type="evidence" value="ECO:0007669"/>
    <property type="project" value="UniProtKB-EC"/>
</dbReference>
<dbReference type="CDD" id="cd00312">
    <property type="entry name" value="Esterase_lipase"/>
    <property type="match status" value="1"/>
</dbReference>
<dbReference type="FunFam" id="3.40.50.1820:FF:000011">
    <property type="entry name" value="Carboxylic ester hydrolase"/>
    <property type="match status" value="1"/>
</dbReference>
<dbReference type="Gene3D" id="3.40.50.1820">
    <property type="entry name" value="alpha/beta hydrolase"/>
    <property type="match status" value="1"/>
</dbReference>
<dbReference type="InterPro" id="IPR029058">
    <property type="entry name" value="AB_hydrolase_fold"/>
</dbReference>
<dbReference type="InterPro" id="IPR002018">
    <property type="entry name" value="CarbesteraseB"/>
</dbReference>
<dbReference type="InterPro" id="IPR019826">
    <property type="entry name" value="Carboxylesterase_B_AS"/>
</dbReference>
<dbReference type="InterPro" id="IPR019819">
    <property type="entry name" value="Carboxylesterase_B_CS"/>
</dbReference>
<dbReference type="InterPro" id="IPR050309">
    <property type="entry name" value="Type-B_Carboxylest/Lipase"/>
</dbReference>
<dbReference type="PANTHER" id="PTHR11559">
    <property type="entry name" value="CARBOXYLESTERASE"/>
    <property type="match status" value="1"/>
</dbReference>
<dbReference type="Pfam" id="PF00135">
    <property type="entry name" value="COesterase"/>
    <property type="match status" value="1"/>
</dbReference>
<dbReference type="SUPFAM" id="SSF53474">
    <property type="entry name" value="alpha/beta-Hydrolases"/>
    <property type="match status" value="1"/>
</dbReference>
<dbReference type="PROSITE" id="PS00122">
    <property type="entry name" value="CARBOXYLESTERASE_B_1"/>
    <property type="match status" value="1"/>
</dbReference>
<dbReference type="PROSITE" id="PS00941">
    <property type="entry name" value="CARBOXYLESTERASE_B_2"/>
    <property type="match status" value="1"/>
</dbReference>
<protein>
    <recommendedName>
        <fullName>Liver carboxylesterase 1</fullName>
        <ecNumber>3.1.1.1</ecNumber>
    </recommendedName>
    <alternativeName>
        <fullName>Acyl-coenzyme A:cholesterol acyltransferase</fullName>
    </alternativeName>
</protein>
<comment type="function">
    <text evidence="7">Involved in the detoxification of xenobiotics and in the activation of ester and amide prodrugs.</text>
</comment>
<comment type="catalytic activity">
    <reaction evidence="3">
        <text>a carboxylic ester + H2O = an alcohol + a carboxylate + H(+)</text>
        <dbReference type="Rhea" id="RHEA:21164"/>
        <dbReference type="ChEBI" id="CHEBI:15377"/>
        <dbReference type="ChEBI" id="CHEBI:15378"/>
        <dbReference type="ChEBI" id="CHEBI:29067"/>
        <dbReference type="ChEBI" id="CHEBI:30879"/>
        <dbReference type="ChEBI" id="CHEBI:33308"/>
        <dbReference type="EC" id="3.1.1.1"/>
    </reaction>
</comment>
<comment type="subunit">
    <text evidence="4">Monomer.</text>
</comment>
<comment type="subcellular location">
    <subcellularLocation>
        <location>Endoplasmic reticulum lumen</location>
    </subcellularLocation>
    <text>Microsomal membrane, lumen of endoplasmic reticulum.</text>
</comment>
<comment type="similarity">
    <text evidence="8">Belongs to the type-B carboxylesterase/lipase family.</text>
</comment>
<keyword id="KW-0002">3D-structure</keyword>
<keyword id="KW-0903">Direct protein sequencing</keyword>
<keyword id="KW-1015">Disulfide bond</keyword>
<keyword id="KW-0256">Endoplasmic reticulum</keyword>
<keyword id="KW-0325">Glycoprotein</keyword>
<keyword id="KW-0378">Hydrolase</keyword>
<keyword id="KW-1185">Reference proteome</keyword>
<keyword id="KW-0719">Serine esterase</keyword>
<keyword id="KW-0732">Signal</keyword>
<sequence length="565" mass="62292">MWLCALALASLAACTAWGHPSAPPVVDTVHGKVLGKFVSLEGFAQPVAVFLGVPFAKPPLGSLRFAPPQPAESWSHVKNTTSYPPMCSQDAVSGHMLSELFTNRKENIPLKFSEDCLYLNIYTPADLTKRGRLPVMVWIHGGGLMVGGASTYDGLALSAHENVVVVTIQYRLGIWGFFSTGDEHSRGNWGHLDQVAALRWVQDNIANFGGDPGSVTIFGESAGGQSVSILLLSPLTKNLFHRAISESGVALLSSLFRKNTKSLAEKIAIEAGCKTTTSAVMVHCLRQKTEEELMEVTLKMKFMALDLVGDPKENTAFLTTVIDGVLLPKAPAEILAEKKYNMLPYMVGINQQEFGWIIPMQMLGYPLSEGKLDQKTATELLWKSYPIVNVSKELTPVATEKYLGGTDDPVKKKDLFLDMLADLLFGVPSVNVARHHRDAGAPTYMYEYRYRPSFSSDMRPKTVIGDHGDEIFSVLGAPFLKEGATEEEIKLSKMVMKYWANFARNGNPNGEGLPQWPAYDYKEGYLQIGATTQAAQKLKDKEVAFWTELWAKEAARPRETEHIEL</sequence>